<name>TRUB_MYCUA</name>
<protein>
    <recommendedName>
        <fullName evidence="1">tRNA pseudouridine synthase B</fullName>
        <ecNumber evidence="1">5.4.99.25</ecNumber>
    </recommendedName>
    <alternativeName>
        <fullName evidence="1">tRNA pseudouridine(55) synthase</fullName>
        <shortName evidence="1">Psi55 synthase</shortName>
    </alternativeName>
    <alternativeName>
        <fullName evidence="1">tRNA pseudouridylate synthase</fullName>
    </alternativeName>
    <alternativeName>
        <fullName evidence="1">tRNA-uridine isomerase</fullName>
    </alternativeName>
</protein>
<keyword id="KW-0413">Isomerase</keyword>
<keyword id="KW-0819">tRNA processing</keyword>
<evidence type="ECO:0000255" key="1">
    <source>
        <dbReference type="HAMAP-Rule" id="MF_01080"/>
    </source>
</evidence>
<reference key="1">
    <citation type="journal article" date="2007" name="Genome Res.">
        <title>Reductive evolution and niche adaptation inferred from the genome of Mycobacterium ulcerans, the causative agent of Buruli ulcer.</title>
        <authorList>
            <person name="Stinear T.P."/>
            <person name="Seemann T."/>
            <person name="Pidot S."/>
            <person name="Frigui W."/>
            <person name="Reysset G."/>
            <person name="Garnier T."/>
            <person name="Meurice G."/>
            <person name="Simon D."/>
            <person name="Bouchier C."/>
            <person name="Ma L."/>
            <person name="Tichit M."/>
            <person name="Porter J.L."/>
            <person name="Ryan J."/>
            <person name="Johnson P.D.R."/>
            <person name="Davies J.K."/>
            <person name="Jenkin G.A."/>
            <person name="Small P.L.C."/>
            <person name="Jones L.M."/>
            <person name="Tekaia F."/>
            <person name="Laval F."/>
            <person name="Daffe M."/>
            <person name="Parkhill J."/>
            <person name="Cole S.T."/>
        </authorList>
    </citation>
    <scope>NUCLEOTIDE SEQUENCE [LARGE SCALE GENOMIC DNA]</scope>
    <source>
        <strain>Agy99</strain>
    </source>
</reference>
<feature type="chain" id="PRO_1000084629" description="tRNA pseudouridine synthase B">
    <location>
        <begin position="1"/>
        <end position="301"/>
    </location>
</feature>
<feature type="active site" description="Nucleophile" evidence="1">
    <location>
        <position position="48"/>
    </location>
</feature>
<proteinExistence type="inferred from homology"/>
<comment type="function">
    <text evidence="1">Responsible for synthesis of pseudouridine from uracil-55 in the psi GC loop of transfer RNAs.</text>
</comment>
<comment type="catalytic activity">
    <reaction evidence="1">
        <text>uridine(55) in tRNA = pseudouridine(55) in tRNA</text>
        <dbReference type="Rhea" id="RHEA:42532"/>
        <dbReference type="Rhea" id="RHEA-COMP:10101"/>
        <dbReference type="Rhea" id="RHEA-COMP:10102"/>
        <dbReference type="ChEBI" id="CHEBI:65314"/>
        <dbReference type="ChEBI" id="CHEBI:65315"/>
        <dbReference type="EC" id="5.4.99.25"/>
    </reaction>
</comment>
<comment type="similarity">
    <text evidence="1">Belongs to the pseudouridine synthase TruB family. Type 1 subfamily.</text>
</comment>
<accession>A0PQD9</accession>
<gene>
    <name evidence="1" type="primary">truB</name>
    <name type="ordered locus">MUL_2142</name>
</gene>
<organism>
    <name type="scientific">Mycobacterium ulcerans (strain Agy99)</name>
    <dbReference type="NCBI Taxonomy" id="362242"/>
    <lineage>
        <taxon>Bacteria</taxon>
        <taxon>Bacillati</taxon>
        <taxon>Actinomycetota</taxon>
        <taxon>Actinomycetes</taxon>
        <taxon>Mycobacteriales</taxon>
        <taxon>Mycobacteriaceae</taxon>
        <taxon>Mycobacterium</taxon>
        <taxon>Mycobacterium ulcerans group</taxon>
    </lineage>
</organism>
<dbReference type="EC" id="5.4.99.25" evidence="1"/>
<dbReference type="EMBL" id="CP000325">
    <property type="protein sequence ID" value="ABL04558.1"/>
    <property type="molecule type" value="Genomic_DNA"/>
</dbReference>
<dbReference type="RefSeq" id="WP_011740175.1">
    <property type="nucleotide sequence ID" value="NC_008611.1"/>
</dbReference>
<dbReference type="SMR" id="A0PQD9"/>
<dbReference type="KEGG" id="mul:MUL_2142"/>
<dbReference type="eggNOG" id="COG0130">
    <property type="taxonomic scope" value="Bacteria"/>
</dbReference>
<dbReference type="HOGENOM" id="CLU_032087_0_0_11"/>
<dbReference type="Proteomes" id="UP000000765">
    <property type="component" value="Chromosome"/>
</dbReference>
<dbReference type="GO" id="GO:0003723">
    <property type="term" value="F:RNA binding"/>
    <property type="evidence" value="ECO:0007669"/>
    <property type="project" value="InterPro"/>
</dbReference>
<dbReference type="GO" id="GO:0160148">
    <property type="term" value="F:tRNA pseudouridine(55) synthase activity"/>
    <property type="evidence" value="ECO:0007669"/>
    <property type="project" value="UniProtKB-EC"/>
</dbReference>
<dbReference type="GO" id="GO:1990481">
    <property type="term" value="P:mRNA pseudouridine synthesis"/>
    <property type="evidence" value="ECO:0007669"/>
    <property type="project" value="TreeGrafter"/>
</dbReference>
<dbReference type="GO" id="GO:0031119">
    <property type="term" value="P:tRNA pseudouridine synthesis"/>
    <property type="evidence" value="ECO:0007669"/>
    <property type="project" value="UniProtKB-UniRule"/>
</dbReference>
<dbReference type="CDD" id="cd02573">
    <property type="entry name" value="PseudoU_synth_EcTruB"/>
    <property type="match status" value="1"/>
</dbReference>
<dbReference type="FunFam" id="3.30.2350.10:FF:000011">
    <property type="entry name" value="tRNA pseudouridine synthase B"/>
    <property type="match status" value="1"/>
</dbReference>
<dbReference type="Gene3D" id="3.30.2350.10">
    <property type="entry name" value="Pseudouridine synthase"/>
    <property type="match status" value="1"/>
</dbReference>
<dbReference type="Gene3D" id="2.30.130.10">
    <property type="entry name" value="PUA domain"/>
    <property type="match status" value="1"/>
</dbReference>
<dbReference type="HAMAP" id="MF_01080">
    <property type="entry name" value="TruB_bact"/>
    <property type="match status" value="1"/>
</dbReference>
<dbReference type="InterPro" id="IPR020103">
    <property type="entry name" value="PsdUridine_synth_cat_dom_sf"/>
</dbReference>
<dbReference type="InterPro" id="IPR002501">
    <property type="entry name" value="PsdUridine_synth_N"/>
</dbReference>
<dbReference type="InterPro" id="IPR015947">
    <property type="entry name" value="PUA-like_sf"/>
</dbReference>
<dbReference type="InterPro" id="IPR036974">
    <property type="entry name" value="PUA_sf"/>
</dbReference>
<dbReference type="InterPro" id="IPR015225">
    <property type="entry name" value="tRNA_psdUridine_synth_fam2_C"/>
</dbReference>
<dbReference type="InterPro" id="IPR014780">
    <property type="entry name" value="tRNA_psdUridine_synth_TruB"/>
</dbReference>
<dbReference type="InterPro" id="IPR032819">
    <property type="entry name" value="TruB_C"/>
</dbReference>
<dbReference type="NCBIfam" id="TIGR00431">
    <property type="entry name" value="TruB"/>
    <property type="match status" value="1"/>
</dbReference>
<dbReference type="PANTHER" id="PTHR13767:SF2">
    <property type="entry name" value="PSEUDOURIDYLATE SYNTHASE TRUB1"/>
    <property type="match status" value="1"/>
</dbReference>
<dbReference type="PANTHER" id="PTHR13767">
    <property type="entry name" value="TRNA-PSEUDOURIDINE SYNTHASE"/>
    <property type="match status" value="1"/>
</dbReference>
<dbReference type="Pfam" id="PF09142">
    <property type="entry name" value="TruB_C"/>
    <property type="match status" value="1"/>
</dbReference>
<dbReference type="Pfam" id="PF16198">
    <property type="entry name" value="TruB_C_2"/>
    <property type="match status" value="1"/>
</dbReference>
<dbReference type="Pfam" id="PF01509">
    <property type="entry name" value="TruB_N"/>
    <property type="match status" value="1"/>
</dbReference>
<dbReference type="SUPFAM" id="SSF55120">
    <property type="entry name" value="Pseudouridine synthase"/>
    <property type="match status" value="1"/>
</dbReference>
<dbReference type="SUPFAM" id="SSF88697">
    <property type="entry name" value="PUA domain-like"/>
    <property type="match status" value="1"/>
</dbReference>
<sequence>MSRQNAGPGFGPGIVVVDKPGAMTSHDVVGRCRRIFGTRRLGHAGTLDPMATGVLVIGIERATKILGLLIATSKSYAATIRLGQTTSTEDAEGEPLASVSAEHVAPEAIAAAILDLTGDIRQVPSAVSAIKVDGRRAYQLAREGQTVELAARPVRIDRFELMDLRRGADVIDIDVEVDCSSGTYIRALARDLGAALDVGGHLTSLRRTRVSHFDLSQAASLDELAERPALSLTLDQACLLMFPRRDLTVDESQSVGNGRPLEPAGIDGIYAASDADGRVIALLRDEGRRTKSVVVIRPATM</sequence>